<comment type="function">
    <molecule>Capsid protein C</molecule>
    <text evidence="6">Plays a role in virus budding by binding to the cell membrane and gathering the viral RNA into a nucleocapsid that forms the core of a mature virus particle. During virus entry, may induce genome penetration into the host cytoplasm after hemifusion induced by the surface proteins. Can migrate to the cell nucleus where it modulates host functions.</text>
</comment>
<comment type="function">
    <molecule>Capsid protein C</molecule>
    <text evidence="2">Inhibits RNA silencing by interfering with host Dicer.</text>
</comment>
<comment type="function">
    <molecule>Peptide pr</molecule>
    <text evidence="6">Prevents premature fusion activity of envelope proteins in trans-Golgi by binding to envelope protein E at pH6.0. After virion release in extracellular space, gets dissociated from E dimers.</text>
</comment>
<comment type="function">
    <molecule>Protein prM</molecule>
    <text evidence="6">Acts as a chaperone for envelope protein E during intracellular virion assembly by masking and inactivating envelope protein E fusion peptide. prM is the only viral peptide matured by host furin in the trans-Golgi network probably to avoid catastrophic activation of the viral fusion activity in acidic Golgi compartment prior to virion release. prM-E cleavage is inefficient, and many virions are only partially matured. These uncleaved prM would play a role in immune evasion.</text>
</comment>
<comment type="function">
    <molecule>Small envelope protein M</molecule>
    <text evidence="6">May play a role in virus budding. Exerts cytotoxic effects by activating a mitochondrial apoptotic pathway through M ectodomain. May display a viroporin activity.</text>
</comment>
<comment type="function">
    <molecule>Envelope protein E</molecule>
    <text evidence="6">Binds to host cell surface receptor and mediates fusion between viral and cellular membranes. Envelope protein is synthesized in the endoplasmic reticulum in the form of heterodimer with protein prM. They play a role in virion budding in the ER, and the newly formed immature particle is covered with 60 spikes composed of heterodimer between precursor prM and envelope protein E. The virion is transported to the Golgi apparatus where the low pH causes dissociation of PrM-E heterodimers and formation of E homodimers. prM-E cleavage is inefficient, and many virions are only partially matured. These uncleaved prM would play a role in immune evasion.</text>
</comment>
<comment type="function">
    <molecule>Non-structural protein 1</molecule>
    <text evidence="10">Involved in immune evasion, pathogenesis and viral replication. Once cleaved off the polyprotein, is targeted to three destinations: the viral replication cycle, the plasma membrane and the extracellular compartment. Essential for viral replication. Required for formation of the replication complex and recruitment of other non-structural proteins to the ER-derived membrane structures. Excreted as a hexameric lipoparticle that plays a role against host immune response. Antagonizing the complement function. Binds to the host macrophages and dendritic cells. Inhibits signal transduction originating from Toll-like receptor 3 (TLR3).</text>
</comment>
<comment type="function">
    <molecule>Non-structural protein 2A</molecule>
    <text evidence="6">Component of the viral RNA replication complex that functions in virion assembly and antagonizes the host immune response.</text>
</comment>
<comment type="function">
    <molecule>Serine protease subunit NS2B</molecule>
    <text evidence="6 14">Required cofactor for the serine protease function of NS3. May have membrane-destabilizing activity and form viroporins (By similarity).</text>
</comment>
<comment type="function">
    <molecule>Serine protease NS3</molecule>
    <text evidence="2 15">Displays three enzymatic activities: serine protease, NTPase and RNA helicase. NS3 serine protease, in association with NS2B, performs its autocleavage and cleaves the polyprotein at dibasic sites in the cytoplasm: C-prM, NS2A-NS2B, NS2B-NS3, NS3-NS4A, NS4A-2K and NS4B-NS5. NS3 RNA helicase binds RNA and unwinds dsRNA in the 3' to 5' direction. Also plays a role in virus assembly (By similarity).</text>
</comment>
<comment type="function">
    <molecule>Non-structural protein 4A</molecule>
    <text evidence="10">Regulates the ATPase activity of the NS3 helicase activity. NS4A allows NS3 helicase to conserve energy during unwinding.</text>
</comment>
<comment type="function">
    <molecule>Peptide 2k</molecule>
    <text evidence="6">Functions as a signal peptide for NS4B and is required for the interferon antagonism activity of the latter.</text>
</comment>
<comment type="function">
    <molecule>Non-structural protein 4B</molecule>
    <text evidence="10">Induces the formation of ER-derived membrane vesicles where the viral replication takes place. Inhibits interferon (IFN)-induced host STAT1 phosphorylation and nuclear translocation, thereby preventing the establishment of cellular antiviral state by blocking the IFN-alpha/beta pathway.</text>
</comment>
<comment type="function">
    <molecule>RNA-directed RNA polymerase NS5</molecule>
    <text evidence="2">Replicates the viral (+) and (-) RNA genome, and performs the capping of genomes in the cytoplasm. NS5 methylates viral RNA cap at guanine N-7 and ribose 2'-O positions (By similarity). Besides its role in RNA genome replication, also prevents the establishment of cellular antiviral state by blocking the interferon-alpha/beta (IFN-alpha/beta) signaling pathway. IFN-I induces binding of NS5 to host IFN-activated transcription factor STAT2, preventing its transcriptional activity. Host TRIM23 is the E3 ligase that interacts with and polyubiquitinates NS5 to promote its binding to STAT2 and trigger IFN-I signaling inhibition.</text>
</comment>
<comment type="catalytic activity">
    <reaction>
        <text>Selective hydrolysis of -Xaa-Xaa-|-Yaa- bonds in which each of the Xaa can be either Arg or Lys and Yaa can be either Ser or Ala.</text>
        <dbReference type="EC" id="3.4.21.91"/>
    </reaction>
</comment>
<comment type="catalytic activity">
    <reaction evidence="12">
        <text>RNA(n) + a ribonucleoside 5'-triphosphate = RNA(n+1) + diphosphate</text>
        <dbReference type="Rhea" id="RHEA:21248"/>
        <dbReference type="Rhea" id="RHEA-COMP:14527"/>
        <dbReference type="Rhea" id="RHEA-COMP:17342"/>
        <dbReference type="ChEBI" id="CHEBI:33019"/>
        <dbReference type="ChEBI" id="CHEBI:61557"/>
        <dbReference type="ChEBI" id="CHEBI:140395"/>
        <dbReference type="EC" id="2.7.7.48"/>
    </reaction>
</comment>
<comment type="catalytic activity">
    <reaction>
        <text>a ribonucleoside 5'-triphosphate + H2O = a ribonucleoside 5'-diphosphate + phosphate + H(+)</text>
        <dbReference type="Rhea" id="RHEA:23680"/>
        <dbReference type="ChEBI" id="CHEBI:15377"/>
        <dbReference type="ChEBI" id="CHEBI:15378"/>
        <dbReference type="ChEBI" id="CHEBI:43474"/>
        <dbReference type="ChEBI" id="CHEBI:57930"/>
        <dbReference type="ChEBI" id="CHEBI:61557"/>
        <dbReference type="EC" id="3.6.1.15"/>
    </reaction>
</comment>
<comment type="catalytic activity">
    <reaction>
        <text>ATP + H2O = ADP + phosphate + H(+)</text>
        <dbReference type="Rhea" id="RHEA:13065"/>
        <dbReference type="ChEBI" id="CHEBI:15377"/>
        <dbReference type="ChEBI" id="CHEBI:15378"/>
        <dbReference type="ChEBI" id="CHEBI:30616"/>
        <dbReference type="ChEBI" id="CHEBI:43474"/>
        <dbReference type="ChEBI" id="CHEBI:456216"/>
        <dbReference type="EC" id="3.6.4.13"/>
    </reaction>
</comment>
<comment type="catalytic activity">
    <reaction evidence="16">
        <text>a 5'-end (5'-triphosphoguanosine)-ribonucleoside in mRNA + S-adenosyl-L-methionine = a 5'-end (N(7)-methyl 5'-triphosphoguanosine)-ribonucleoside in mRNA + S-adenosyl-L-homocysteine</text>
        <dbReference type="Rhea" id="RHEA:67008"/>
        <dbReference type="Rhea" id="RHEA-COMP:17166"/>
        <dbReference type="Rhea" id="RHEA-COMP:17167"/>
        <dbReference type="ChEBI" id="CHEBI:57856"/>
        <dbReference type="ChEBI" id="CHEBI:59789"/>
        <dbReference type="ChEBI" id="CHEBI:156461"/>
        <dbReference type="ChEBI" id="CHEBI:167617"/>
        <dbReference type="EC" id="2.1.1.56"/>
    </reaction>
</comment>
<comment type="catalytic activity">
    <reaction evidence="16">
        <text>a 5'-end (N(7)-methyl 5'-triphosphoguanosine)-ribonucleoside in mRNA + S-adenosyl-L-methionine = a 5'-end (N(7)-methyl 5'-triphosphoguanosine)-(2'-O-methyl-ribonucleoside) in mRNA + S-adenosyl-L-homocysteine + H(+)</text>
        <dbReference type="Rhea" id="RHEA:67020"/>
        <dbReference type="Rhea" id="RHEA-COMP:17167"/>
        <dbReference type="Rhea" id="RHEA-COMP:17168"/>
        <dbReference type="ChEBI" id="CHEBI:15378"/>
        <dbReference type="ChEBI" id="CHEBI:57856"/>
        <dbReference type="ChEBI" id="CHEBI:59789"/>
        <dbReference type="ChEBI" id="CHEBI:156461"/>
        <dbReference type="ChEBI" id="CHEBI:167609"/>
        <dbReference type="EC" id="2.1.1.57"/>
    </reaction>
</comment>
<comment type="subunit">
    <molecule>Capsid protein C</molecule>
    <text evidence="6">Homodimer (By similarity). Interacts (via N-terminus) with host EXOC1 (via C-terminus); this interaction results in EXOC1 degradation through the proteasome degradation pathway (By similarity).</text>
</comment>
<comment type="subunit">
    <molecule>Protein prM</molecule>
    <text evidence="6">Forms heterodimers with envelope protein E in the endoplasmic reticulum and Golgi.</text>
</comment>
<comment type="subunit">
    <molecule>Envelope protein E</molecule>
    <text evidence="6">Homodimer; in the endoplasmic reticulum and Golgi (By similarity). Interacts with protein prM (By similarity). Interacts with non-structural protein 1 (By similarity).</text>
</comment>
<comment type="subunit">
    <molecule>Non-structural protein 1</molecule>
    <text evidence="6">Homodimer; Homohexamer when secreted (By similarity). Interacts with envelope protein E (By similarity).</text>
</comment>
<comment type="subunit">
    <molecule>Non-structural protein 2A</molecule>
    <text evidence="2">Interacts (via N-terminus) with serine protease NS3.</text>
</comment>
<comment type="subunit">
    <molecule>Serine protease subunit NS2B</molecule>
    <text evidence="6">Forms a heterodimer with serine protease NS3 (By similarity). May form homooligomers (By similarity).</text>
</comment>
<comment type="subunit">
    <molecule>Serine protease NS3</molecule>
    <text evidence="6">Forms a heterodimer with NS2B (By similarity). Interacts with non-structural protein 2A (via N-terminus) (By similarity). Interacts with NS4B (By similarity). Interacts with unphosphorylated RNA-directed RNA polymerase NS5; this interaction stimulates RNA-directed RNA polymerase NS5 guanylyltransferase activity (By similarity). NS3 interacts with host PDCD6IP; this interaction contributes to virion release (By similarity).</text>
</comment>
<comment type="subunit">
    <molecule>Non-structural protein 4B</molecule>
    <text evidence="6">Interacts with serine protease NS3 (By similarity).</text>
</comment>
<comment type="subunit">
    <molecule>RNA-directed RNA polymerase NS5</molecule>
    <text evidence="2">Homodimer (By similarity). Interacts with host STAT2; this interaction prevents the establishment of cellular antiviral state (By similarity). Interacts with serine protease NS3 (By similarity). Interacts with host TRIM23; this interaction leads to NS5 ubiquitination (By similarity).</text>
</comment>
<comment type="subcellular location">
    <molecule>Capsid protein C</molecule>
    <subcellularLocation>
        <location evidence="6">Virion</location>
    </subcellularLocation>
    <subcellularLocation>
        <location evidence="6">Host nucleus</location>
    </subcellularLocation>
    <subcellularLocation>
        <location evidence="6">Host cytoplasm</location>
        <location evidence="6">Host perinuclear region</location>
    </subcellularLocation>
    <subcellularLocation>
        <location evidence="6">Host cytoplasm</location>
    </subcellularLocation>
</comment>
<comment type="subcellular location">
    <molecule>Peptide pr</molecule>
    <subcellularLocation>
        <location evidence="6">Secreted</location>
    </subcellularLocation>
</comment>
<comment type="subcellular location">
    <molecule>Small envelope protein M</molecule>
    <subcellularLocation>
        <location evidence="2">Virion membrane</location>
        <topology evidence="2">Multi-pass membrane protein</topology>
    </subcellularLocation>
    <subcellularLocation>
        <location evidence="2">Host endoplasmic reticulum membrane</location>
        <topology evidence="11">Multi-pass membrane protein</topology>
    </subcellularLocation>
    <text evidence="2">ER membrane retention is mediated by the transmembrane domains.</text>
</comment>
<comment type="subcellular location">
    <molecule>Envelope protein E</molecule>
    <subcellularLocation>
        <location evidence="19">Virion membrane</location>
        <topology evidence="2">Multi-pass membrane protein</topology>
    </subcellularLocation>
    <subcellularLocation>
        <location evidence="2">Host endoplasmic reticulum membrane</location>
        <topology evidence="11">Multi-pass membrane protein</topology>
    </subcellularLocation>
    <text evidence="2">ER membrane retention is mediated by the transmembrane domains.</text>
</comment>
<comment type="subcellular location">
    <molecule>Non-structural protein 1</molecule>
    <subcellularLocation>
        <location evidence="6">Secreted</location>
    </subcellularLocation>
    <subcellularLocation>
        <location>Host endoplasmic reticulum membrane</location>
        <topology>Peripheral membrane protein</topology>
        <orientation evidence="6">Lumenal side</orientation>
    </subcellularLocation>
    <text evidence="10">Located in RE-derived vesicles hosting the replication complex.</text>
</comment>
<comment type="subcellular location">
    <molecule>Non-structural protein 2A</molecule>
    <subcellularLocation>
        <location evidence="6">Host endoplasmic reticulum membrane</location>
        <topology evidence="6">Multi-pass membrane protein</topology>
    </subcellularLocation>
</comment>
<comment type="subcellular location">
    <molecule>Serine protease subunit NS2B</molecule>
    <subcellularLocation>
        <location>Host endoplasmic reticulum membrane</location>
        <topology evidence="6">Multi-pass membrane protein</topology>
    </subcellularLocation>
</comment>
<comment type="subcellular location">
    <molecule>Serine protease NS3</molecule>
    <subcellularLocation>
        <location evidence="15">Host endoplasmic reticulum membrane</location>
        <topology evidence="15">Peripheral membrane protein</topology>
        <orientation evidence="15">Cytoplasmic side</orientation>
    </subcellularLocation>
    <text evidence="15">Remains non-covalently associated to serine protease subunit NS2B.</text>
</comment>
<comment type="subcellular location">
    <molecule>Non-structural protein 4A</molecule>
    <subcellularLocation>
        <location evidence="6">Host endoplasmic reticulum membrane</location>
        <topology evidence="6">Multi-pass membrane protein</topology>
    </subcellularLocation>
    <text evidence="6">Located in RE-associated vesicles hosting the replication complex.</text>
</comment>
<comment type="subcellular location">
    <molecule>Non-structural protein 4B</molecule>
    <subcellularLocation>
        <location evidence="6">Host endoplasmic reticulum membrane</location>
        <topology evidence="6">Multi-pass membrane protein</topology>
    </subcellularLocation>
    <text evidence="10">Located in RE-derived vesicles hosting the replication complex.</text>
</comment>
<comment type="subcellular location">
    <molecule>RNA-directed RNA polymerase NS5</molecule>
    <subcellularLocation>
        <location>Host endoplasmic reticulum membrane</location>
        <topology>Peripheral membrane protein</topology>
        <orientation>Cytoplasmic side</orientation>
    </subcellularLocation>
    <subcellularLocation>
        <location evidence="6">Host nucleus</location>
    </subcellularLocation>
    <text evidence="6">Located in RE-associated vesicles hosting the replication complex. NS5 protein is mainly localized in the nucleus rather than in ER vesicles.</text>
</comment>
<comment type="domain">
    <text evidence="6">The transmembrane domains of the small envelope protein M and envelope protein E contain an endoplasmic reticulum retention signal.</text>
</comment>
<comment type="PTM">
    <molecule>Genome polyprotein</molecule>
    <text evidence="2 18">Specific enzymatic cleavages in vivo yield mature proteins. The nascent capsid protein C contains a C-terminal hydrophobic domain that act as a signal sequence for translocation of prM into the lumen of the ER. Mature capsid protein C is cleaved at a site upstream of this hydrophobic domain by NS3. prM is cleaved in post-Golgi vesicles by a host furin, releasing the mature small envelope protein M, and peptide pr. Non-structural protein 2A-alpha, a C-terminally truncated form of non-structural protein 2A, results from partial cleavage by NS3. Specific enzymatic cleavages in vivo yield mature proteins peptide 2K acts as a signal sequence and is removed from the N-terminus of NS4B by the host signal peptidase in the ER lumen. Signal cleavage at the 2K-4B site requires a prior NS3 protease-mediated cleavage at the 4A-2K site.</text>
</comment>
<comment type="PTM">
    <molecule>Protein prM</molecule>
    <text evidence="6 18">Cleaved in post-Golgi vesicles by a host furin, releasing the mature small envelope protein M, and peptide pr. This cleavage is incomplete as up to 30% of viral particles still carry uncleaved prM.</text>
</comment>
<comment type="PTM">
    <molecule>Envelope protein E</molecule>
    <text evidence="6">N-glycosylated.</text>
</comment>
<comment type="PTM">
    <molecule>Non-structural protein 1</molecule>
    <text evidence="6">N-glycosylated. The excreted form is glycosylated and this is required for efficient secretion of the protein from infected cells.</text>
</comment>
<comment type="PTM">
    <text evidence="2">Polyubiquitinated; ubiquitination is probably mediated by host TRIM23 and is prerequisite for NS5-STAT2 interaction. NS5 is not ISGylated or sumoylated.</text>
</comment>
<comment type="PTM">
    <molecule>Serine protease NS3</molecule>
    <text evidence="8">Acetylated by host KAT5. Acetylation modulates NS3 RNA-binding and unwinding activities and plays an important positive role for viral replication.</text>
</comment>
<comment type="PTM">
    <molecule>RNA-directed RNA polymerase NS5</molecule>
    <text evidence="6">Phosphorylated on serines residues. This phosphorylation may trigger NS5 nuclear localization.</text>
</comment>
<comment type="similarity">
    <text evidence="16">In the N-terminal section; belongs to the class I-like SAM-binding methyltransferase superfamily. mRNA cap 0-1 NS5-type methyltransferase family.</text>
</comment>
<dbReference type="EC" id="3.4.21.91"/>
<dbReference type="EC" id="3.6.1.15" evidence="10"/>
<dbReference type="EC" id="3.6.4.13" evidence="10"/>
<dbReference type="EC" id="2.1.1.56" evidence="16"/>
<dbReference type="EC" id="2.1.1.57" evidence="16"/>
<dbReference type="EC" id="2.7.7.48" evidence="12"/>
<dbReference type="EMBL" id="AF094612">
    <property type="protein sequence ID" value="AAC72235.1"/>
    <property type="molecule type" value="Genomic_RNA"/>
</dbReference>
<dbReference type="SMR" id="Q9YRV3"/>
<dbReference type="MEROPS" id="S07.001"/>
<dbReference type="Proteomes" id="UP000008608">
    <property type="component" value="Genome"/>
</dbReference>
<dbReference type="GO" id="GO:0005576">
    <property type="term" value="C:extracellular region"/>
    <property type="evidence" value="ECO:0007669"/>
    <property type="project" value="UniProtKB-SubCell"/>
</dbReference>
<dbReference type="GO" id="GO:0044167">
    <property type="term" value="C:host cell endoplasmic reticulum membrane"/>
    <property type="evidence" value="ECO:0007669"/>
    <property type="project" value="UniProtKB-SubCell"/>
</dbReference>
<dbReference type="GO" id="GO:0042025">
    <property type="term" value="C:host cell nucleus"/>
    <property type="evidence" value="ECO:0007669"/>
    <property type="project" value="UniProtKB-SubCell"/>
</dbReference>
<dbReference type="GO" id="GO:0044220">
    <property type="term" value="C:host cell perinuclear region of cytoplasm"/>
    <property type="evidence" value="ECO:0007669"/>
    <property type="project" value="UniProtKB-SubCell"/>
</dbReference>
<dbReference type="GO" id="GO:0016020">
    <property type="term" value="C:membrane"/>
    <property type="evidence" value="ECO:0007669"/>
    <property type="project" value="UniProtKB-KW"/>
</dbReference>
<dbReference type="GO" id="GO:0019028">
    <property type="term" value="C:viral capsid"/>
    <property type="evidence" value="ECO:0007669"/>
    <property type="project" value="UniProtKB-KW"/>
</dbReference>
<dbReference type="GO" id="GO:0019031">
    <property type="term" value="C:viral envelope"/>
    <property type="evidence" value="ECO:0007669"/>
    <property type="project" value="UniProtKB-KW"/>
</dbReference>
<dbReference type="GO" id="GO:0055036">
    <property type="term" value="C:virion membrane"/>
    <property type="evidence" value="ECO:0007669"/>
    <property type="project" value="UniProtKB-SubCell"/>
</dbReference>
<dbReference type="GO" id="GO:0005524">
    <property type="term" value="F:ATP binding"/>
    <property type="evidence" value="ECO:0007669"/>
    <property type="project" value="UniProtKB-KW"/>
</dbReference>
<dbReference type="GO" id="GO:0016887">
    <property type="term" value="F:ATP hydrolysis activity"/>
    <property type="evidence" value="ECO:0007669"/>
    <property type="project" value="RHEA"/>
</dbReference>
<dbReference type="GO" id="GO:0003725">
    <property type="term" value="F:double-stranded RNA binding"/>
    <property type="evidence" value="ECO:0007669"/>
    <property type="project" value="InterPro"/>
</dbReference>
<dbReference type="GO" id="GO:0005525">
    <property type="term" value="F:GTP binding"/>
    <property type="evidence" value="ECO:0007669"/>
    <property type="project" value="UniProtKB-KW"/>
</dbReference>
<dbReference type="GO" id="GO:0046872">
    <property type="term" value="F:metal ion binding"/>
    <property type="evidence" value="ECO:0007669"/>
    <property type="project" value="UniProtKB-KW"/>
</dbReference>
<dbReference type="GO" id="GO:0004483">
    <property type="term" value="F:mRNA (nucleoside-2'-O-)-methyltransferase activity"/>
    <property type="evidence" value="ECO:0007669"/>
    <property type="project" value="UniProtKB-EC"/>
</dbReference>
<dbReference type="GO" id="GO:0004482">
    <property type="term" value="F:mRNA 5'-cap (guanine-N7-)-methyltransferase activity"/>
    <property type="evidence" value="ECO:0007669"/>
    <property type="project" value="UniProtKB-EC"/>
</dbReference>
<dbReference type="GO" id="GO:0046983">
    <property type="term" value="F:protein dimerization activity"/>
    <property type="evidence" value="ECO:0007669"/>
    <property type="project" value="InterPro"/>
</dbReference>
<dbReference type="GO" id="GO:0003724">
    <property type="term" value="F:RNA helicase activity"/>
    <property type="evidence" value="ECO:0007669"/>
    <property type="project" value="UniProtKB-EC"/>
</dbReference>
<dbReference type="GO" id="GO:0003968">
    <property type="term" value="F:RNA-directed RNA polymerase activity"/>
    <property type="evidence" value="ECO:0007669"/>
    <property type="project" value="UniProtKB-KW"/>
</dbReference>
<dbReference type="GO" id="GO:0004252">
    <property type="term" value="F:serine-type endopeptidase activity"/>
    <property type="evidence" value="ECO:0007669"/>
    <property type="project" value="InterPro"/>
</dbReference>
<dbReference type="GO" id="GO:0005198">
    <property type="term" value="F:structural molecule activity"/>
    <property type="evidence" value="ECO:0007669"/>
    <property type="project" value="InterPro"/>
</dbReference>
<dbReference type="GO" id="GO:0075512">
    <property type="term" value="P:clathrin-dependent endocytosis of virus by host cell"/>
    <property type="evidence" value="ECO:0007669"/>
    <property type="project" value="UniProtKB-KW"/>
</dbReference>
<dbReference type="GO" id="GO:0039654">
    <property type="term" value="P:fusion of virus membrane with host endosome membrane"/>
    <property type="evidence" value="ECO:0007669"/>
    <property type="project" value="UniProtKB-KW"/>
</dbReference>
<dbReference type="GO" id="GO:0006508">
    <property type="term" value="P:proteolysis"/>
    <property type="evidence" value="ECO:0007669"/>
    <property type="project" value="UniProtKB-KW"/>
</dbReference>
<dbReference type="GO" id="GO:0039520">
    <property type="term" value="P:symbiont-mediated activation of host autophagy"/>
    <property type="evidence" value="ECO:0007669"/>
    <property type="project" value="UniProtKB-KW"/>
</dbReference>
<dbReference type="GO" id="GO:0052170">
    <property type="term" value="P:symbiont-mediated suppression of host innate immune response"/>
    <property type="evidence" value="ECO:0007669"/>
    <property type="project" value="UniProtKB-KW"/>
</dbReference>
<dbReference type="GO" id="GO:0039564">
    <property type="term" value="P:symbiont-mediated suppression of host JAK-STAT cascade via inhibition of STAT2 activity"/>
    <property type="evidence" value="ECO:0007669"/>
    <property type="project" value="UniProtKB-KW"/>
</dbReference>
<dbReference type="GO" id="GO:0039502">
    <property type="term" value="P:symbiont-mediated suppression of host type I interferon-mediated signaling pathway"/>
    <property type="evidence" value="ECO:0007669"/>
    <property type="project" value="UniProtKB-KW"/>
</dbReference>
<dbReference type="GO" id="GO:0039694">
    <property type="term" value="P:viral RNA genome replication"/>
    <property type="evidence" value="ECO:0007669"/>
    <property type="project" value="InterPro"/>
</dbReference>
<dbReference type="GO" id="GO:0019062">
    <property type="term" value="P:virion attachment to host cell"/>
    <property type="evidence" value="ECO:0007669"/>
    <property type="project" value="UniProtKB-KW"/>
</dbReference>
<dbReference type="CDD" id="cd20761">
    <property type="entry name" value="capping_2-OMTase_Flaviviridae"/>
    <property type="match status" value="1"/>
</dbReference>
<dbReference type="CDD" id="cd17931">
    <property type="entry name" value="DEXHc_viral_Ns3"/>
    <property type="match status" value="1"/>
</dbReference>
<dbReference type="CDD" id="cd12149">
    <property type="entry name" value="Flavi_E_C"/>
    <property type="match status" value="1"/>
</dbReference>
<dbReference type="CDD" id="cd17038">
    <property type="entry name" value="Flavi_M"/>
    <property type="match status" value="1"/>
</dbReference>
<dbReference type="CDD" id="cd23204">
    <property type="entry name" value="Flavivirus_RdRp"/>
    <property type="match status" value="1"/>
</dbReference>
<dbReference type="FunFam" id="1.20.1280.260:FF:000001">
    <property type="entry name" value="Envelope glycoprotein"/>
    <property type="match status" value="1"/>
</dbReference>
<dbReference type="FunFam" id="1.10.260.90:FF:000001">
    <property type="entry name" value="Genome polyprotein"/>
    <property type="match status" value="1"/>
</dbReference>
<dbReference type="FunFam" id="2.40.10.120:FF:000006">
    <property type="entry name" value="Genome polyprotein"/>
    <property type="match status" value="1"/>
</dbReference>
<dbReference type="FunFam" id="2.60.260.50:FF:000001">
    <property type="entry name" value="Genome polyprotein"/>
    <property type="match status" value="1"/>
</dbReference>
<dbReference type="FunFam" id="3.30.70.2840:FF:000001">
    <property type="entry name" value="Genome polyprotein"/>
    <property type="match status" value="1"/>
</dbReference>
<dbReference type="FunFam" id="3.30.70.2840:FF:000002">
    <property type="entry name" value="Genome polyprotein"/>
    <property type="match status" value="1"/>
</dbReference>
<dbReference type="FunFam" id="3.40.50.150:FF:000105">
    <property type="entry name" value="Genome polyprotein"/>
    <property type="match status" value="1"/>
</dbReference>
<dbReference type="FunFam" id="3.40.50.300:FF:000763">
    <property type="entry name" value="Genome polyprotein"/>
    <property type="match status" value="1"/>
</dbReference>
<dbReference type="Gene3D" id="1.10.260.90">
    <property type="match status" value="1"/>
</dbReference>
<dbReference type="Gene3D" id="1.20.1280.260">
    <property type="match status" value="1"/>
</dbReference>
<dbReference type="Gene3D" id="2.40.10.120">
    <property type="match status" value="2"/>
</dbReference>
<dbReference type="Gene3D" id="2.60.40.350">
    <property type="match status" value="1"/>
</dbReference>
<dbReference type="Gene3D" id="1.10.8.970">
    <property type="entry name" value="Flavivirus envelope glycoprotein M-like"/>
    <property type="match status" value="1"/>
</dbReference>
<dbReference type="Gene3D" id="2.60.260.50">
    <property type="entry name" value="Flavivirus polyprotein propeptide domain"/>
    <property type="match status" value="1"/>
</dbReference>
<dbReference type="Gene3D" id="3.30.70.2840">
    <property type="entry name" value="Flavivirus RNA-directed RNA polymerase, thumb domain"/>
    <property type="match status" value="3"/>
</dbReference>
<dbReference type="Gene3D" id="3.40.50.300">
    <property type="entry name" value="P-loop containing nucleotide triphosphate hydrolases"/>
    <property type="match status" value="2"/>
</dbReference>
<dbReference type="Gene3D" id="2.60.98.10">
    <property type="entry name" value="Tick-borne Encephalitis virus Glycoprotein, domain 1"/>
    <property type="match status" value="1"/>
</dbReference>
<dbReference type="Gene3D" id="3.40.50.150">
    <property type="entry name" value="Vaccinia Virus protein VP39"/>
    <property type="match status" value="1"/>
</dbReference>
<dbReference type="Gene3D" id="3.30.67.10">
    <property type="entry name" value="Viral Envelope Glycoprotein, domain 2"/>
    <property type="match status" value="1"/>
</dbReference>
<dbReference type="Gene3D" id="3.30.387.10">
    <property type="entry name" value="Viral Envelope Glycoprotein, domain 3"/>
    <property type="match status" value="1"/>
</dbReference>
<dbReference type="InterPro" id="IPR043502">
    <property type="entry name" value="DNA/RNA_pol_sf"/>
</dbReference>
<dbReference type="InterPro" id="IPR000069">
    <property type="entry name" value="Env_glycoprot_M_flavivir"/>
</dbReference>
<dbReference type="InterPro" id="IPR038302">
    <property type="entry name" value="Env_glycoprot_M_sf_flavivir"/>
</dbReference>
<dbReference type="InterPro" id="IPR013755">
    <property type="entry name" value="Flav_gly_cen_dom_subdom1"/>
</dbReference>
<dbReference type="InterPro" id="IPR001122">
    <property type="entry name" value="Flavi_capsidC"/>
</dbReference>
<dbReference type="InterPro" id="IPR011492">
    <property type="entry name" value="Flavi_DEAD"/>
</dbReference>
<dbReference type="InterPro" id="IPR027287">
    <property type="entry name" value="Flavi_E_Ig-like"/>
</dbReference>
<dbReference type="InterPro" id="IPR026470">
    <property type="entry name" value="Flavi_E_Stem/Anchor_dom"/>
</dbReference>
<dbReference type="InterPro" id="IPR038345">
    <property type="entry name" value="Flavi_E_Stem/Anchor_dom_sf"/>
</dbReference>
<dbReference type="InterPro" id="IPR011998">
    <property type="entry name" value="Flavi_Glycoprot_E_cen/dimer"/>
</dbReference>
<dbReference type="InterPro" id="IPR001157">
    <property type="entry name" value="Flavi_NS1"/>
</dbReference>
<dbReference type="InterPro" id="IPR000752">
    <property type="entry name" value="Flavi_NS2A"/>
</dbReference>
<dbReference type="InterPro" id="IPR000487">
    <property type="entry name" value="Flavi_NS2B"/>
</dbReference>
<dbReference type="InterPro" id="IPR001850">
    <property type="entry name" value="Flavi_NS3_S7"/>
</dbReference>
<dbReference type="InterPro" id="IPR000404">
    <property type="entry name" value="Flavi_NS4A"/>
</dbReference>
<dbReference type="InterPro" id="IPR001528">
    <property type="entry name" value="Flavi_NS4B"/>
</dbReference>
<dbReference type="InterPro" id="IPR046811">
    <property type="entry name" value="Flavi_NS5_thumb"/>
</dbReference>
<dbReference type="InterPro" id="IPR002535">
    <property type="entry name" value="Flavi_propep"/>
</dbReference>
<dbReference type="InterPro" id="IPR038688">
    <property type="entry name" value="Flavi_propep_sf"/>
</dbReference>
<dbReference type="InterPro" id="IPR047530">
    <property type="entry name" value="Flavi_RdRp"/>
</dbReference>
<dbReference type="InterPro" id="IPR000208">
    <property type="entry name" value="Flavi_RdRp_fingers/palm"/>
</dbReference>
<dbReference type="InterPro" id="IPR000336">
    <property type="entry name" value="Flavivir/Alphavir_Ig-like_sf"/>
</dbReference>
<dbReference type="InterPro" id="IPR014412">
    <property type="entry name" value="Gen_Poly_FLV"/>
</dbReference>
<dbReference type="InterPro" id="IPR036253">
    <property type="entry name" value="Glycoprot_cen/dimer_sf"/>
</dbReference>
<dbReference type="InterPro" id="IPR038055">
    <property type="entry name" value="Glycoprot_E_dimer_dom"/>
</dbReference>
<dbReference type="InterPro" id="IPR013756">
    <property type="entry name" value="GlyE_cen_dom_subdom2"/>
</dbReference>
<dbReference type="InterPro" id="IPR014001">
    <property type="entry name" value="Helicase_ATP-bd"/>
</dbReference>
<dbReference type="InterPro" id="IPR001650">
    <property type="entry name" value="Helicase_C-like"/>
</dbReference>
<dbReference type="InterPro" id="IPR014756">
    <property type="entry name" value="Ig_E-set"/>
</dbReference>
<dbReference type="InterPro" id="IPR026490">
    <property type="entry name" value="mRNA_cap_0/1_MeTrfase"/>
</dbReference>
<dbReference type="InterPro" id="IPR049486">
    <property type="entry name" value="NS3-hel_C_flaviviridae"/>
</dbReference>
<dbReference type="InterPro" id="IPR027417">
    <property type="entry name" value="P-loop_NTPase"/>
</dbReference>
<dbReference type="InterPro" id="IPR009003">
    <property type="entry name" value="Peptidase_S1_PA"/>
</dbReference>
<dbReference type="InterPro" id="IPR007094">
    <property type="entry name" value="RNA-dir_pol_PSvirus"/>
</dbReference>
<dbReference type="InterPro" id="IPR002877">
    <property type="entry name" value="RNA_MeTrfase_FtsJ_dom"/>
</dbReference>
<dbReference type="InterPro" id="IPR029063">
    <property type="entry name" value="SAM-dependent_MTases_sf"/>
</dbReference>
<dbReference type="NCBIfam" id="TIGR04240">
    <property type="entry name" value="flavi_E_stem"/>
    <property type="match status" value="1"/>
</dbReference>
<dbReference type="Pfam" id="PF20907">
    <property type="entry name" value="Flav_NS3-hel_C"/>
    <property type="match status" value="1"/>
</dbReference>
<dbReference type="Pfam" id="PF01003">
    <property type="entry name" value="Flavi_capsid"/>
    <property type="match status" value="1"/>
</dbReference>
<dbReference type="Pfam" id="PF07652">
    <property type="entry name" value="Flavi_DEAD"/>
    <property type="match status" value="1"/>
</dbReference>
<dbReference type="Pfam" id="PF21659">
    <property type="entry name" value="Flavi_E_stem"/>
    <property type="match status" value="1"/>
</dbReference>
<dbReference type="Pfam" id="PF02832">
    <property type="entry name" value="Flavi_glycop_C"/>
    <property type="match status" value="1"/>
</dbReference>
<dbReference type="Pfam" id="PF00869">
    <property type="entry name" value="Flavi_glycoprot"/>
    <property type="match status" value="1"/>
</dbReference>
<dbReference type="Pfam" id="PF01004">
    <property type="entry name" value="Flavi_M"/>
    <property type="match status" value="1"/>
</dbReference>
<dbReference type="Pfam" id="PF00948">
    <property type="entry name" value="Flavi_NS1"/>
    <property type="match status" value="1"/>
</dbReference>
<dbReference type="Pfam" id="PF01005">
    <property type="entry name" value="Flavi_NS2A"/>
    <property type="match status" value="1"/>
</dbReference>
<dbReference type="Pfam" id="PF01002">
    <property type="entry name" value="Flavi_NS2B"/>
    <property type="match status" value="1"/>
</dbReference>
<dbReference type="Pfam" id="PF01350">
    <property type="entry name" value="Flavi_NS4A"/>
    <property type="match status" value="1"/>
</dbReference>
<dbReference type="Pfam" id="PF01349">
    <property type="entry name" value="Flavi_NS4B"/>
    <property type="match status" value="1"/>
</dbReference>
<dbReference type="Pfam" id="PF00972">
    <property type="entry name" value="Flavi_NS5"/>
    <property type="match status" value="1"/>
</dbReference>
<dbReference type="Pfam" id="PF20483">
    <property type="entry name" value="Flavi_NS5_thumb"/>
    <property type="match status" value="1"/>
</dbReference>
<dbReference type="Pfam" id="PF01570">
    <property type="entry name" value="Flavi_propep"/>
    <property type="match status" value="1"/>
</dbReference>
<dbReference type="Pfam" id="PF01728">
    <property type="entry name" value="FtsJ"/>
    <property type="match status" value="1"/>
</dbReference>
<dbReference type="Pfam" id="PF00949">
    <property type="entry name" value="Peptidase_S7"/>
    <property type="match status" value="1"/>
</dbReference>
<dbReference type="PIRSF" id="PIRSF003817">
    <property type="entry name" value="Gen_Poly_FLV"/>
    <property type="match status" value="1"/>
</dbReference>
<dbReference type="SMART" id="SM00487">
    <property type="entry name" value="DEXDc"/>
    <property type="match status" value="1"/>
</dbReference>
<dbReference type="SMART" id="SM00490">
    <property type="entry name" value="HELICc"/>
    <property type="match status" value="1"/>
</dbReference>
<dbReference type="SUPFAM" id="SSF56672">
    <property type="entry name" value="DNA/RNA polymerases"/>
    <property type="match status" value="1"/>
</dbReference>
<dbReference type="SUPFAM" id="SSF81296">
    <property type="entry name" value="E set domains"/>
    <property type="match status" value="1"/>
</dbReference>
<dbReference type="SUPFAM" id="SSF52540">
    <property type="entry name" value="P-loop containing nucleoside triphosphate hydrolases"/>
    <property type="match status" value="2"/>
</dbReference>
<dbReference type="SUPFAM" id="SSF53335">
    <property type="entry name" value="S-adenosyl-L-methionine-dependent methyltransferases"/>
    <property type="match status" value="1"/>
</dbReference>
<dbReference type="SUPFAM" id="SSF50494">
    <property type="entry name" value="Trypsin-like serine proteases"/>
    <property type="match status" value="1"/>
</dbReference>
<dbReference type="SUPFAM" id="SSF56983">
    <property type="entry name" value="Viral glycoprotein, central and dimerisation domains"/>
    <property type="match status" value="1"/>
</dbReference>
<dbReference type="PROSITE" id="PS51527">
    <property type="entry name" value="FLAVIVIRUS_NS2B"/>
    <property type="match status" value="1"/>
</dbReference>
<dbReference type="PROSITE" id="PS51528">
    <property type="entry name" value="FLAVIVIRUS_NS3PRO"/>
    <property type="match status" value="1"/>
</dbReference>
<dbReference type="PROSITE" id="PS51192">
    <property type="entry name" value="HELICASE_ATP_BIND_1"/>
    <property type="match status" value="1"/>
</dbReference>
<dbReference type="PROSITE" id="PS51194">
    <property type="entry name" value="HELICASE_CTER"/>
    <property type="match status" value="1"/>
</dbReference>
<dbReference type="PROSITE" id="PS50507">
    <property type="entry name" value="RDRP_SSRNA_POS"/>
    <property type="match status" value="1"/>
</dbReference>
<dbReference type="PROSITE" id="PS51591">
    <property type="entry name" value="RNA_CAP01_NS5_MT"/>
    <property type="match status" value="1"/>
</dbReference>
<feature type="chain" id="PRO_0000405157" description="Genome polyprotein">
    <location>
        <begin position="1"/>
        <end position="3411"/>
    </location>
</feature>
<feature type="chain" id="PRO_0000261485" description="Capsid protein C" evidence="2">
    <location>
        <begin position="1"/>
        <end position="101"/>
    </location>
</feature>
<feature type="propeptide" id="PRO_0000261486" description="ER anchor for the capsid protein C, removed in mature form by serine protease NS3" evidence="2">
    <location>
        <begin position="102"/>
        <end position="121"/>
    </location>
</feature>
<feature type="chain" id="PRO_0000261487" description="Protein prM" evidence="7">
    <location>
        <begin position="122"/>
        <end position="285"/>
    </location>
</feature>
<feature type="chain" id="PRO_0000261488" description="Peptide pr" evidence="18">
    <location>
        <begin position="122"/>
        <end position="210"/>
    </location>
</feature>
<feature type="chain" id="PRO_0000261489" description="Small envelope protein M" evidence="7">
    <location>
        <begin position="211"/>
        <end position="285"/>
    </location>
</feature>
<feature type="chain" id="PRO_0000261490" description="Envelope protein E" evidence="7">
    <location>
        <begin position="286"/>
        <end position="778"/>
    </location>
</feature>
<feature type="chain" id="PRO_0000261491" description="Non-structural protein 1" evidence="2">
    <location>
        <begin position="779"/>
        <end position="1130"/>
    </location>
</feature>
<feature type="chain" id="PRO_0000261492" description="Non-structural protein 2A" evidence="7">
    <location>
        <begin position="1131"/>
        <end position="1354"/>
    </location>
</feature>
<feature type="chain" id="PRO_0000261493" description="Non-structural protein 2A-alpha" evidence="7">
    <location>
        <begin position="1131"/>
        <end position="1320"/>
    </location>
</feature>
<feature type="chain" id="PRO_0000261494" description="Serine protease subunit NS2B" evidence="2">
    <location>
        <begin position="1355"/>
        <end position="1484"/>
    </location>
</feature>
<feature type="chain" id="PRO_0000261495" description="Serine protease NS3" evidence="2">
    <location>
        <begin position="1485"/>
        <end position="2107"/>
    </location>
</feature>
<feature type="chain" id="PRO_0000261496" description="Non-structural protein 4A" evidence="2">
    <location>
        <begin position="2108"/>
        <end position="2233"/>
    </location>
</feature>
<feature type="peptide" id="PRO_0000261497" description="Peptide 2k" evidence="2">
    <location>
        <begin position="2234"/>
        <end position="2256"/>
    </location>
</feature>
<feature type="chain" id="PRO_0000261498" description="Non-structural protein 4B" evidence="2">
    <location>
        <begin position="2257"/>
        <end position="2506"/>
    </location>
</feature>
<feature type="chain" id="PRO_0000261499" description="RNA-directed RNA polymerase NS5" evidence="2">
    <location>
        <begin position="2507"/>
        <end position="3411"/>
    </location>
</feature>
<feature type="topological domain" description="Cytoplasmic" evidence="11">
    <location>
        <begin position="1"/>
        <end position="104"/>
    </location>
</feature>
<feature type="transmembrane region" description="Helical" evidence="11">
    <location>
        <begin position="105"/>
        <end position="125"/>
    </location>
</feature>
<feature type="topological domain" description="Extracellular" evidence="11">
    <location>
        <begin position="126"/>
        <end position="244"/>
    </location>
</feature>
<feature type="transmembrane region" description="Helical" evidence="11">
    <location>
        <begin position="245"/>
        <end position="265"/>
    </location>
</feature>
<feature type="topological domain" description="Cytoplasmic" evidence="11">
    <location>
        <begin position="266"/>
        <end position="270"/>
    </location>
</feature>
<feature type="transmembrane region" description="Helical" evidence="11">
    <location>
        <begin position="271"/>
        <end position="285"/>
    </location>
</feature>
<feature type="topological domain" description="Extracellular" evidence="11">
    <location>
        <begin position="286"/>
        <end position="730"/>
    </location>
</feature>
<feature type="transmembrane region" description="Helical" evidence="11">
    <location>
        <begin position="731"/>
        <end position="751"/>
    </location>
</feature>
<feature type="topological domain" description="Cytoplasmic" evidence="11">
    <location>
        <begin position="752"/>
        <end position="757"/>
    </location>
</feature>
<feature type="transmembrane region" description="Helical" evidence="11">
    <location>
        <begin position="758"/>
        <end position="778"/>
    </location>
</feature>
<feature type="topological domain" description="Extracellular" evidence="2">
    <location>
        <begin position="779"/>
        <end position="1132"/>
    </location>
</feature>
<feature type="transmembrane region" description="Helical" evidence="2">
    <location>
        <begin position="1133"/>
        <end position="1153"/>
    </location>
</feature>
<feature type="topological domain" description="Cytoplasmic" evidence="2">
    <location>
        <begin position="1154"/>
        <end position="1201"/>
    </location>
</feature>
<feature type="transmembrane region" description="Helical" evidence="2">
    <location>
        <begin position="1202"/>
        <end position="1222"/>
    </location>
</feature>
<feature type="topological domain" description="Lumenal" evidence="2">
    <location>
        <begin position="1223"/>
        <end position="1287"/>
    </location>
</feature>
<feature type="transmembrane region" description="Helical" evidence="2">
    <location>
        <begin position="1288"/>
        <end position="1308"/>
    </location>
</feature>
<feature type="topological domain" description="Cytoplasmic" evidence="2">
    <location>
        <begin position="1309"/>
        <end position="1355"/>
    </location>
</feature>
<feature type="transmembrane region" description="Helical" evidence="2">
    <location>
        <begin position="1356"/>
        <end position="1376"/>
    </location>
</feature>
<feature type="topological domain" description="Lumenal" evidence="2">
    <location>
        <begin position="1377"/>
        <end position="1378"/>
    </location>
</feature>
<feature type="transmembrane region" description="Helical" evidence="11">
    <location>
        <begin position="1379"/>
        <end position="1399"/>
    </location>
</feature>
<feature type="topological domain" description="Cytoplasmic" evidence="11">
    <location>
        <begin position="1400"/>
        <end position="1456"/>
    </location>
</feature>
<feature type="intramembrane region" description="Helical" evidence="11">
    <location>
        <begin position="1457"/>
        <end position="1477"/>
    </location>
</feature>
<feature type="topological domain" description="Cytoplasmic" evidence="11">
    <location>
        <begin position="1478"/>
        <end position="2157"/>
    </location>
</feature>
<feature type="transmembrane region" description="Helical" evidence="11">
    <location>
        <begin position="2158"/>
        <end position="2178"/>
    </location>
</feature>
<feature type="topological domain" description="Lumenal" evidence="11">
    <location>
        <begin position="2179"/>
        <end position="2186"/>
    </location>
</feature>
<feature type="intramembrane region" description="Helical" evidence="11">
    <location>
        <begin position="2187"/>
        <end position="2207"/>
    </location>
</feature>
<feature type="topological domain" description="Lumenal" evidence="11">
    <location>
        <begin position="2208"/>
        <end position="2209"/>
    </location>
</feature>
<feature type="transmembrane region" description="Helical" evidence="11">
    <location>
        <begin position="2210"/>
        <end position="2230"/>
    </location>
</feature>
<feature type="topological domain" description="Cytoplasmic" evidence="11">
    <location>
        <begin position="2231"/>
        <end position="2241"/>
    </location>
</feature>
<feature type="transmembrane region" description="Helical; Note=Signal for NS4B" evidence="19">
    <location>
        <begin position="2242"/>
        <end position="2256"/>
    </location>
</feature>
<feature type="topological domain" description="Lumenal" evidence="11">
    <location>
        <begin position="2257"/>
        <end position="2293"/>
    </location>
</feature>
<feature type="intramembrane region" description="Helical" evidence="11">
    <location>
        <begin position="2294"/>
        <end position="2314"/>
    </location>
</feature>
<feature type="topological domain" description="Lumenal" evidence="11">
    <location>
        <begin position="2315"/>
        <end position="2360"/>
    </location>
</feature>
<feature type="transmembrane region" description="Helical" evidence="11">
    <location>
        <begin position="2361"/>
        <end position="2380"/>
    </location>
</feature>
<feature type="topological domain" description="Cytoplasmic" evidence="11">
    <location>
        <begin position="2381"/>
        <end position="2421"/>
    </location>
</feature>
<feature type="transmembrane region" description="Helical" evidence="11">
    <location>
        <begin position="2422"/>
        <end position="2442"/>
    </location>
</feature>
<feature type="topological domain" description="Lumenal" evidence="11">
    <location>
        <begin position="2443"/>
        <end position="2445"/>
    </location>
</feature>
<feature type="transmembrane region" description="Helical" evidence="11">
    <location>
        <begin position="2446"/>
        <end position="2466"/>
    </location>
</feature>
<feature type="topological domain" description="Cytoplasmic" evidence="11">
    <location>
        <begin position="2467"/>
        <end position="3411"/>
    </location>
</feature>
<feature type="domain" description="Peptidase S7" evidence="15">
    <location>
        <begin position="1485"/>
        <end position="1665"/>
    </location>
</feature>
<feature type="domain" description="Helicase ATP-binding" evidence="13">
    <location>
        <begin position="1669"/>
        <end position="1825"/>
    </location>
</feature>
<feature type="domain" description="Helicase C-terminal">
    <location>
        <begin position="1820"/>
        <end position="1997"/>
    </location>
</feature>
<feature type="domain" description="mRNA cap 0-1 NS5-type MT" evidence="16">
    <location>
        <begin position="2507"/>
        <end position="2771"/>
    </location>
</feature>
<feature type="domain" description="RdRp catalytic" evidence="12">
    <location>
        <begin position="3035"/>
        <end position="3187"/>
    </location>
</feature>
<feature type="region of interest" description="Hydrophobic; homodimerization of capsid protein C" evidence="7">
    <location>
        <begin position="38"/>
        <end position="72"/>
    </location>
</feature>
<feature type="region of interest" description="Fusion peptide" evidence="4">
    <location>
        <begin position="383"/>
        <end position="396"/>
    </location>
</feature>
<feature type="region of interest" description="Interacts with and activates NS3 protease" evidence="14">
    <location>
        <begin position="1407"/>
        <end position="1446"/>
    </location>
</feature>
<feature type="region of interest" description="Important for RNA-binding" evidence="5">
    <location>
        <begin position="1673"/>
        <end position="1676"/>
    </location>
</feature>
<feature type="region of interest" description="Disordered" evidence="17">
    <location>
        <begin position="1942"/>
        <end position="1961"/>
    </location>
</feature>
<feature type="short sequence motif" description="DEAH box" evidence="13">
    <location>
        <begin position="1773"/>
        <end position="1776"/>
    </location>
</feature>
<feature type="short sequence motif" description="Nuclear localization signal" evidence="1">
    <location>
        <begin position="2878"/>
        <end position="2911"/>
    </location>
</feature>
<feature type="active site" description="Charge relay system; for serine protease NS3 activity" evidence="15">
    <location>
        <position position="1537"/>
    </location>
</feature>
<feature type="active site" description="Charge relay system; for serine protease NS3 activity" evidence="15">
    <location>
        <position position="1561"/>
    </location>
</feature>
<feature type="active site" description="Charge relay system; for serine protease NS3 activity" evidence="15">
    <location>
        <position position="1622"/>
    </location>
</feature>
<feature type="active site" description="For 2'-O-MTase activity" evidence="9">
    <location>
        <position position="2567"/>
    </location>
</feature>
<feature type="active site" description="For 2'-O-MTase activity" evidence="9">
    <location>
        <position position="2652"/>
    </location>
</feature>
<feature type="active site" description="For 2'-O-MTase activity" evidence="9">
    <location>
        <position position="2688"/>
    </location>
</feature>
<feature type="active site" description="For 2'-O-MTase activity" evidence="9">
    <location>
        <position position="2724"/>
    </location>
</feature>
<feature type="binding site" evidence="13">
    <location>
        <begin position="1682"/>
        <end position="1689"/>
    </location>
    <ligand>
        <name>ATP</name>
        <dbReference type="ChEBI" id="CHEBI:30616"/>
    </ligand>
</feature>
<feature type="binding site" evidence="16">
    <location>
        <position position="2562"/>
    </location>
    <ligand>
        <name>S-adenosyl-L-methionine</name>
        <dbReference type="ChEBI" id="CHEBI:59789"/>
    </ligand>
</feature>
<feature type="binding site" evidence="16">
    <location>
        <position position="2592"/>
    </location>
    <ligand>
        <name>S-adenosyl-L-methionine</name>
        <dbReference type="ChEBI" id="CHEBI:59789"/>
    </ligand>
</feature>
<feature type="binding site" evidence="16">
    <location>
        <position position="2593"/>
    </location>
    <ligand>
        <name>S-adenosyl-L-methionine</name>
        <dbReference type="ChEBI" id="CHEBI:59789"/>
    </ligand>
</feature>
<feature type="binding site" evidence="16">
    <location>
        <position position="2610"/>
    </location>
    <ligand>
        <name>S-adenosyl-L-methionine</name>
        <dbReference type="ChEBI" id="CHEBI:59789"/>
    </ligand>
</feature>
<feature type="binding site" evidence="16">
    <location>
        <position position="2611"/>
    </location>
    <ligand>
        <name>S-adenosyl-L-methionine</name>
        <dbReference type="ChEBI" id="CHEBI:59789"/>
    </ligand>
</feature>
<feature type="binding site" evidence="16">
    <location>
        <position position="2637"/>
    </location>
    <ligand>
        <name>S-adenosyl-L-methionine</name>
        <dbReference type="ChEBI" id="CHEBI:59789"/>
    </ligand>
</feature>
<feature type="binding site" evidence="16">
    <location>
        <position position="2638"/>
    </location>
    <ligand>
        <name>S-adenosyl-L-methionine</name>
        <dbReference type="ChEBI" id="CHEBI:59789"/>
    </ligand>
</feature>
<feature type="binding site" evidence="16">
    <location>
        <position position="2653"/>
    </location>
    <ligand>
        <name>S-adenosyl-L-methionine</name>
        <dbReference type="ChEBI" id="CHEBI:59789"/>
    </ligand>
</feature>
<feature type="binding site" evidence="16">
    <location>
        <position position="2726"/>
    </location>
    <ligand>
        <name>S-adenosyl-L-methionine</name>
        <dbReference type="ChEBI" id="CHEBI:59789"/>
    </ligand>
</feature>
<feature type="binding site" evidence="3">
    <location>
        <position position="2945"/>
    </location>
    <ligand>
        <name>Zn(2+)</name>
        <dbReference type="ChEBI" id="CHEBI:29105"/>
        <label>1</label>
    </ligand>
</feature>
<feature type="binding site" evidence="3">
    <location>
        <position position="2949"/>
    </location>
    <ligand>
        <name>Zn(2+)</name>
        <dbReference type="ChEBI" id="CHEBI:29105"/>
        <label>1</label>
    </ligand>
</feature>
<feature type="binding site" evidence="3">
    <location>
        <position position="2954"/>
    </location>
    <ligand>
        <name>Zn(2+)</name>
        <dbReference type="ChEBI" id="CHEBI:29105"/>
        <label>1</label>
    </ligand>
</feature>
<feature type="binding site" evidence="3">
    <location>
        <position position="2957"/>
    </location>
    <ligand>
        <name>Zn(2+)</name>
        <dbReference type="ChEBI" id="CHEBI:29105"/>
        <label>1</label>
    </ligand>
</feature>
<feature type="binding site" evidence="3">
    <location>
        <position position="3222"/>
    </location>
    <ligand>
        <name>Zn(2+)</name>
        <dbReference type="ChEBI" id="CHEBI:29105"/>
        <label>2</label>
    </ligand>
</feature>
<feature type="binding site" evidence="3">
    <location>
        <position position="3238"/>
    </location>
    <ligand>
        <name>Zn(2+)</name>
        <dbReference type="ChEBI" id="CHEBI:29105"/>
        <label>2</label>
    </ligand>
</feature>
<feature type="binding site" evidence="3">
    <location>
        <position position="3357"/>
    </location>
    <ligand>
        <name>Zn(2+)</name>
        <dbReference type="ChEBI" id="CHEBI:29105"/>
        <label>2</label>
    </ligand>
</feature>
<feature type="site" description="Cleavage; by viral protease NS3" evidence="2">
    <location>
        <begin position="101"/>
        <end position="102"/>
    </location>
</feature>
<feature type="site" description="Cleavage; by host signal peptidase" evidence="2">
    <location>
        <begin position="121"/>
        <end position="122"/>
    </location>
</feature>
<feature type="site" description="Cleavage; by host furin" evidence="11 18">
    <location>
        <begin position="210"/>
        <end position="211"/>
    </location>
</feature>
<feature type="site" description="Cleavage; by host signal peptidase" evidence="7">
    <location>
        <begin position="285"/>
        <end position="286"/>
    </location>
</feature>
<feature type="site" description="Cleavage; by host signal peptidase" evidence="2">
    <location>
        <begin position="778"/>
        <end position="779"/>
    </location>
</feature>
<feature type="site" description="Cleavage; by host" evidence="7">
    <location>
        <begin position="1130"/>
        <end position="1131"/>
    </location>
</feature>
<feature type="site" description="Cleavage; by viral protease NS3" evidence="7">
    <location>
        <begin position="1354"/>
        <end position="1355"/>
    </location>
</feature>
<feature type="site" description="Cleavage; by autolysis" evidence="2">
    <location>
        <begin position="1484"/>
        <end position="1485"/>
    </location>
</feature>
<feature type="site" description="Involved in NS3 ATPase and RTPase activities" evidence="3">
    <location>
        <position position="1945"/>
    </location>
</feature>
<feature type="site" description="Involved in NS3 ATPase and RTPase activities" evidence="3">
    <location>
        <position position="1948"/>
    </location>
</feature>
<feature type="site" description="Cleavage; by autolysis" evidence="2">
    <location>
        <begin position="2107"/>
        <end position="2108"/>
    </location>
</feature>
<feature type="site" description="Cleavage; by viral protease NS3" evidence="7">
    <location>
        <begin position="2233"/>
        <end position="2234"/>
    </location>
</feature>
<feature type="site" description="Cleavage; by host signal peptidase" evidence="7">
    <location>
        <begin position="2256"/>
        <end position="2257"/>
    </location>
</feature>
<feature type="site" description="Cleavage; by viral protease NS3" evidence="2">
    <location>
        <begin position="2506"/>
        <end position="2507"/>
    </location>
</feature>
<feature type="site" description="mRNA cap binding" evidence="16">
    <location>
        <position position="2519"/>
    </location>
</feature>
<feature type="site" description="mRNA cap binding; via carbonyl oxygen" evidence="16">
    <location>
        <position position="2522"/>
    </location>
</feature>
<feature type="site" description="mRNA cap binding" evidence="16">
    <location>
        <position position="2523"/>
    </location>
</feature>
<feature type="site" description="mRNA cap binding; via carbonyl oxygen" evidence="16">
    <location>
        <position position="2525"/>
    </location>
</feature>
<feature type="site" description="mRNA cap binding" evidence="16">
    <location>
        <position position="2530"/>
    </location>
</feature>
<feature type="site" description="mRNA cap binding" evidence="16">
    <location>
        <position position="2534"/>
    </location>
</feature>
<feature type="site" description="Essential for 2'-O-methyltransferase activity" evidence="16">
    <location>
        <position position="2567"/>
    </location>
</feature>
<feature type="site" description="Essential for 2'-O-methyltransferase and N-7 methyltransferase activity" evidence="16">
    <location>
        <position position="2652"/>
    </location>
</feature>
<feature type="site" description="mRNA cap binding" evidence="16">
    <location>
        <position position="2656"/>
    </location>
</feature>
<feature type="site" description="Essential for 2'-O-methyltransferase activity" evidence="16">
    <location>
        <position position="2688"/>
    </location>
</feature>
<feature type="site" description="mRNA cap binding" evidence="16">
    <location>
        <position position="2719"/>
    </location>
</feature>
<feature type="site" description="mRNA cap binding" evidence="16">
    <location>
        <position position="2721"/>
    </location>
</feature>
<feature type="site" description="Essential for 2'-O-methyltransferase activity" evidence="16">
    <location>
        <position position="2724"/>
    </location>
</feature>
<feature type="modified residue" description="N6-acetyllysine; by host" evidence="8">
    <location>
        <position position="1877"/>
    </location>
</feature>
<feature type="modified residue" description="Phosphoserine" evidence="2">
    <location>
        <position position="2562"/>
    </location>
</feature>
<feature type="glycosylation site" description="N-linked (GlcNAc...) asparagine; by host" evidence="11">
    <location>
        <position position="134"/>
    </location>
</feature>
<feature type="glycosylation site" description="N-linked (GlcNAc...) asparagine; by host" evidence="11">
    <location>
        <position position="150"/>
    </location>
</feature>
<feature type="glycosylation site" description="N-linked (GlcNAc...) asparagine; by host" evidence="11">
    <location>
        <position position="908"/>
    </location>
</feature>
<feature type="glycosylation site" description="N-linked (GlcNAc...) asparagine; by host" evidence="11">
    <location>
        <position position="986"/>
    </location>
</feature>
<feature type="disulfide bond" evidence="6">
    <location>
        <begin position="288"/>
        <end position="315"/>
    </location>
</feature>
<feature type="disulfide bond" evidence="6">
    <location>
        <begin position="345"/>
        <end position="406"/>
    </location>
</feature>
<feature type="disulfide bond" evidence="1">
    <location>
        <begin position="345"/>
        <end position="401"/>
    </location>
</feature>
<feature type="disulfide bond" evidence="6">
    <location>
        <begin position="359"/>
        <end position="390"/>
    </location>
</feature>
<feature type="disulfide bond" evidence="1">
    <location>
        <begin position="377"/>
        <end position="406"/>
    </location>
</feature>
<feature type="disulfide bond" evidence="6">
    <location>
        <begin position="377"/>
        <end position="401"/>
    </location>
</feature>
<feature type="disulfide bond" evidence="6">
    <location>
        <begin position="467"/>
        <end position="568"/>
    </location>
</feature>
<feature type="disulfide bond" evidence="6">
    <location>
        <begin position="585"/>
        <end position="615"/>
    </location>
</feature>
<feature type="disulfide bond" evidence="6">
    <location>
        <begin position="782"/>
        <end position="793"/>
    </location>
</feature>
<feature type="disulfide bond" evidence="6">
    <location>
        <begin position="833"/>
        <end position="921"/>
    </location>
</feature>
<feature type="disulfide bond" evidence="6">
    <location>
        <begin position="957"/>
        <end position="1002"/>
    </location>
</feature>
<feature type="disulfide bond" evidence="6">
    <location>
        <begin position="1058"/>
        <end position="1107"/>
    </location>
</feature>
<feature type="disulfide bond" evidence="6">
    <location>
        <begin position="1069"/>
        <end position="1091"/>
    </location>
</feature>
<feature type="disulfide bond" evidence="6">
    <location>
        <begin position="1090"/>
        <end position="1094"/>
    </location>
</feature>
<evidence type="ECO:0000250" key="1"/>
<evidence type="ECO:0000250" key="2">
    <source>
        <dbReference type="UniProtKB" id="P03314"/>
    </source>
</evidence>
<evidence type="ECO:0000250" key="3">
    <source>
        <dbReference type="UniProtKB" id="P14335"/>
    </source>
</evidence>
<evidence type="ECO:0000250" key="4">
    <source>
        <dbReference type="UniProtKB" id="P14336"/>
    </source>
</evidence>
<evidence type="ECO:0000250" key="5">
    <source>
        <dbReference type="UniProtKB" id="P14340"/>
    </source>
</evidence>
<evidence type="ECO:0000250" key="6">
    <source>
        <dbReference type="UniProtKB" id="P17763"/>
    </source>
</evidence>
<evidence type="ECO:0000250" key="7">
    <source>
        <dbReference type="UniProtKB" id="P29990"/>
    </source>
</evidence>
<evidence type="ECO:0000250" key="8">
    <source>
        <dbReference type="UniProtKB" id="Q32ZE1"/>
    </source>
</evidence>
<evidence type="ECO:0000250" key="9">
    <source>
        <dbReference type="UniProtKB" id="Q6YMS4"/>
    </source>
</evidence>
<evidence type="ECO:0000250" key="10">
    <source>
        <dbReference type="UniProtKB" id="Q9Q6P4"/>
    </source>
</evidence>
<evidence type="ECO:0000255" key="11"/>
<evidence type="ECO:0000255" key="12">
    <source>
        <dbReference type="PROSITE-ProRule" id="PRU00539"/>
    </source>
</evidence>
<evidence type="ECO:0000255" key="13">
    <source>
        <dbReference type="PROSITE-ProRule" id="PRU00541"/>
    </source>
</evidence>
<evidence type="ECO:0000255" key="14">
    <source>
        <dbReference type="PROSITE-ProRule" id="PRU00859"/>
    </source>
</evidence>
<evidence type="ECO:0000255" key="15">
    <source>
        <dbReference type="PROSITE-ProRule" id="PRU00860"/>
    </source>
</evidence>
<evidence type="ECO:0000255" key="16">
    <source>
        <dbReference type="PROSITE-ProRule" id="PRU00924"/>
    </source>
</evidence>
<evidence type="ECO:0000256" key="17">
    <source>
        <dbReference type="SAM" id="MobiDB-lite"/>
    </source>
</evidence>
<evidence type="ECO:0000269" key="18">
    <source>
    </source>
</evidence>
<evidence type="ECO:0000305" key="19"/>
<organismHost>
    <name type="scientific">Aedes aegypti</name>
    <name type="common">Yellowfever mosquito</name>
    <name type="synonym">Culex aegypti</name>
    <dbReference type="NCBI Taxonomy" id="7159"/>
</organismHost>
<organismHost>
    <name type="scientific">Aedes luteocephalus</name>
    <name type="common">Mosquito</name>
    <dbReference type="NCBI Taxonomy" id="299629"/>
</organismHost>
<organismHost>
    <name type="scientific">Aedes simpsoni</name>
    <dbReference type="NCBI Taxonomy" id="7161"/>
</organismHost>
<organismHost>
    <name type="scientific">Homo sapiens</name>
    <name type="common">Human</name>
    <dbReference type="NCBI Taxonomy" id="9606"/>
</organismHost>
<organismHost>
    <name type="scientific">Simiiformes</name>
    <dbReference type="NCBI Taxonomy" id="314293"/>
</organismHost>
<keyword id="KW-0007">Acetylation</keyword>
<keyword id="KW-1072">Activation of host autophagy by virus</keyword>
<keyword id="KW-0067">ATP-binding</keyword>
<keyword id="KW-0167">Capsid protein</keyword>
<keyword id="KW-1165">Clathrin-mediated endocytosis of virus by host</keyword>
<keyword id="KW-0165">Cleavage on pair of basic residues</keyword>
<keyword id="KW-1015">Disulfide bond</keyword>
<keyword id="KW-1170">Fusion of virus membrane with host endosomal membrane</keyword>
<keyword id="KW-1168">Fusion of virus membrane with host membrane</keyword>
<keyword id="KW-0325">Glycoprotein</keyword>
<keyword id="KW-0342">GTP-binding</keyword>
<keyword id="KW-0347">Helicase</keyword>
<keyword id="KW-1035">Host cytoplasm</keyword>
<keyword id="KW-1038">Host endoplasmic reticulum</keyword>
<keyword id="KW-1043">Host membrane</keyword>
<keyword id="KW-1048">Host nucleus</keyword>
<keyword id="KW-0945">Host-virus interaction</keyword>
<keyword id="KW-0378">Hydrolase</keyword>
<keyword id="KW-1090">Inhibition of host innate immune response by virus</keyword>
<keyword id="KW-1114">Inhibition of host interferon signaling pathway by virus</keyword>
<keyword id="KW-1106">Inhibition of host STAT2 by virus</keyword>
<keyword id="KW-0922">Interferon antiviral system evasion</keyword>
<keyword id="KW-0472">Membrane</keyword>
<keyword id="KW-0479">Metal-binding</keyword>
<keyword id="KW-0489">Methyltransferase</keyword>
<keyword id="KW-0506">mRNA capping</keyword>
<keyword id="KW-0507">mRNA processing</keyword>
<keyword id="KW-0511">Multifunctional enzyme</keyword>
<keyword id="KW-0547">Nucleotide-binding</keyword>
<keyword id="KW-0548">Nucleotidyltransferase</keyword>
<keyword id="KW-0597">Phosphoprotein</keyword>
<keyword id="KW-0645">Protease</keyword>
<keyword id="KW-0694">RNA-binding</keyword>
<keyword id="KW-0696">RNA-directed RNA polymerase</keyword>
<keyword id="KW-0949">S-adenosyl-L-methionine</keyword>
<keyword id="KW-0964">Secreted</keyword>
<keyword id="KW-0720">Serine protease</keyword>
<keyword id="KW-0941">Suppressor of RNA silencing</keyword>
<keyword id="KW-0804">Transcription</keyword>
<keyword id="KW-0805">Transcription regulation</keyword>
<keyword id="KW-0808">Transferase</keyword>
<keyword id="KW-0812">Transmembrane</keyword>
<keyword id="KW-1133">Transmembrane helix</keyword>
<keyword id="KW-0832">Ubl conjugation</keyword>
<keyword id="KW-1161">Viral attachment to host cell</keyword>
<keyword id="KW-0261">Viral envelope protein</keyword>
<keyword id="KW-0899">Viral immunoevasion</keyword>
<keyword id="KW-1162">Viral penetration into host cytoplasm</keyword>
<keyword id="KW-0693">Viral RNA replication</keyword>
<keyword id="KW-0946">Virion</keyword>
<keyword id="KW-1164">Virus endocytosis by host</keyword>
<keyword id="KW-1160">Virus entry into host cell</keyword>
<keyword id="KW-0862">Zinc</keyword>
<organism>
    <name type="scientific">Yellow fever virus (strain Trinidad/TRINID79A/1979)</name>
    <name type="common">YFV</name>
    <dbReference type="NCBI Taxonomy" id="407137"/>
    <lineage>
        <taxon>Viruses</taxon>
        <taxon>Riboviria</taxon>
        <taxon>Orthornavirae</taxon>
        <taxon>Kitrinoviricota</taxon>
        <taxon>Flasuviricetes</taxon>
        <taxon>Amarillovirales</taxon>
        <taxon>Flaviviridae</taxon>
        <taxon>Orthoflavivirus</taxon>
        <taxon>Orthoflavivirus flavi</taxon>
    </lineage>
</organism>
<name>POLG_YEFVT</name>
<protein>
    <recommendedName>
        <fullName>Genome polyprotein</fullName>
    </recommendedName>
    <component>
        <recommendedName>
            <fullName>Capsid protein C</fullName>
        </recommendedName>
        <alternativeName>
            <fullName>Core protein</fullName>
        </alternativeName>
    </component>
    <component>
        <recommendedName>
            <fullName>Protein prM</fullName>
        </recommendedName>
    </component>
    <component>
        <recommendedName>
            <fullName>Peptide pr</fullName>
        </recommendedName>
    </component>
    <component>
        <recommendedName>
            <fullName>Small envelope protein M</fullName>
        </recommendedName>
        <alternativeName>
            <fullName>Matrix protein</fullName>
        </alternativeName>
    </component>
    <component>
        <recommendedName>
            <fullName>Envelope protein E</fullName>
        </recommendedName>
    </component>
    <component>
        <recommendedName>
            <fullName>Non-structural protein 1</fullName>
            <shortName>NS1</shortName>
        </recommendedName>
    </component>
    <component>
        <recommendedName>
            <fullName>Non-structural protein 2A</fullName>
            <shortName>NS2A</shortName>
        </recommendedName>
    </component>
    <component>
        <recommendedName>
            <fullName>Non-structural protein 2A-alpha</fullName>
            <shortName>NS2A-alpha</shortName>
        </recommendedName>
    </component>
    <component>
        <recommendedName>
            <fullName>Serine protease subunit NS2B</fullName>
        </recommendedName>
        <alternativeName>
            <fullName>Flavivirin protease NS2B regulatory subunit</fullName>
        </alternativeName>
        <alternativeName>
            <fullName>Non-structural protein 2B</fullName>
        </alternativeName>
    </component>
    <component>
        <recommendedName>
            <fullName>Serine protease NS3</fullName>
            <ecNumber>3.4.21.91</ecNumber>
            <ecNumber evidence="10">3.6.1.15</ecNumber>
            <ecNumber evidence="10">3.6.4.13</ecNumber>
        </recommendedName>
        <alternativeName>
            <fullName>Flavivirin protease NS3 catalytic subunit</fullName>
        </alternativeName>
        <alternativeName>
            <fullName>Non-structural protein 3</fullName>
        </alternativeName>
    </component>
    <component>
        <recommendedName>
            <fullName>Non-structural protein 4A</fullName>
            <shortName>NS4A</shortName>
        </recommendedName>
    </component>
    <component>
        <recommendedName>
            <fullName>Peptide 2k</fullName>
        </recommendedName>
    </component>
    <component>
        <recommendedName>
            <fullName>Non-structural protein 4B</fullName>
            <shortName>NS4B</shortName>
        </recommendedName>
    </component>
    <component>
        <recommendedName>
            <fullName>RNA-directed RNA polymerase NS5</fullName>
            <ecNumber evidence="16">2.1.1.56</ecNumber>
            <ecNumber evidence="16">2.1.1.57</ecNumber>
            <ecNumber evidence="12">2.7.7.48</ecNumber>
        </recommendedName>
        <alternativeName>
            <fullName>Non-structural protein 5</fullName>
        </alternativeName>
    </component>
</protein>
<sequence>MSGRKAQGKTLGVNMVRRGVRSLSNKIKQKTKQIGNRPGPSRGVQGFIFFFLFNILTGKKITAQLKRLWKMLDPRQGLAALRKVKRVVAGLMRGLSSRKRRSHDVLTVQFLILGMLLMTGGVTLMRKNRWLLLNVTSEDLGKTFSIGTGNCTTNILEAKYWCPDSMEYNCPNLSPREEPDDIDCWCYGVENVRVTYGKCDSAGRSRRSRRAIDLPTHENHGLKTRQEKWMTGRMGERQLQKIERWFVRNPFFAVTALTIAYLVGSNMTQRVVIALLVLAVGPAYSAHCIGVADRDFIEGVHGGTWVSATLEQDKCVTVMAPDKPSLDISLETVAIDGPVEARKVCYNAVLTHVKIDDKCPSTGEAHLAEENEGDNACKRTYSDRGWGNGCGLFGKGSIVACAKFTCAKSMSLFEVDQTKIQYVIKAQLHVGAKQEDWKTDIKTLKFDVLSGSQEAEFTGYGKVTLECQVQTAVDFGNSYIAEMEKESWIVDRQWAQDLTLPWQSGSGGVWREMHHLVEFEPPHAATIRVLALGDQEGSLKTALTGAMRVTKDTNDNNLYKLHGGHVSCRVKLSALTLKGTSYKMCTDKMSFVKNPTDTGHGTVVMQVKVPKGAPCKIPVIVADDLTAAINKGILVTVNPIASTNDDEVLIEVNPPFGDSYIIIGTGDSRLTYQWHKEGSSIGKLFTQTMKGAERLAVMGDAAWDFSSAGGFFTSVGKGIHTVFGSAFQGLFGGLNWITKVIMGAVLIWVGFNTRNMTMSMSMILVGVIMMFLSLGVGADQGCAINFGKRELKCGDGIFIFRDSDDWLNKYSYYPEDPVKLASIVKASFEEGKCGLNSVDSLEHEMWRSRADEINAILEENEVDISVVVQDPKNVYQRGTHPFSRIRDGLQYGWKTWGKNLVFSPGRKNGSFIIDGKSRKECPFSNRVWNSFQIEEFGTGVFTTRVYMDAVFEYTIDCDGSILGAAVNGKKSAHGSPTFWMGSHEVNGTWMIHTLEALDYKECEWPLTHTIGTSVEESEMFMPRSIGGPVSSHNHIPGYKVQTNGPWMQVPLEVKREACPGTSVIIDGNCDGRGKSTRSTTDSGKIIPEWCCRSCTMPPVSFHGSDGCWYPMEIRPMKTHESHLVRSWVTAGEIHAVPFGLVSMMIAMEVVLRKRQGPKQVLVGGVVLLGAMLVGQVTLLDLLELTVAVGLHFHEMNNGGDAMYMALIAAFSVRPGLLIGFGLRTLWSPRERLVLALGAAMVEIALGGMMGGLWKYLNAVSLCILTINAVASRKASNAILPLMALLTPVTMAEVRLATMLFCTVVIIGVLHQNSKDTSMQKTIPLVALTLTSYLGLTQPFLGLCAFLATRIFGRRSIPVNEALAATGLVGVLAGLAFQEMENFLGPIAVGGILMMLVSVAGRVDGLELKKLGEVSWEEEAEISGSSARYDVALSEQGEFKLLSEEKVPWDQVVMTSLALVGAAIHPFALLLVLAGWLFHVRRARRSGDVLWDIPTPKIIEECEHLEDGIYGIFQSTFLGASQRGVGVAQGGVFHTMWHVTRGAFLVWNGKKLIPSWASVKEDLVAYGGSWKLEGRWDGEEEVQLIAAAPGKNVVNVQTKPSLFKVRNGGEIGAVALDYPSGTSGSPIVNRNGEVIGLYGNGILVGDNSFVSAISQTEVKEEGKEELQEIPTMLKKGKTTILDFHPGAGKTRRFLPQILAECARRRLRTLVLAPTRVVLSEMKEAFHGLDVKFHTQAFSAHGSGREVIDVMCHATLTYRMLEPTRIVNWEVIIMDEAHFLDPASIAARGWAAHRARANESATILMTATPPGTSDEFPHSNGEIEDVQTDIPSEPWNTGHDWILADKRPTAWFLPSIRAANVMAASLRKAGKSVVVLNRKTFEREYPTIKQKKPDFILATDIAEMGANLCVERVLDCRTAFKPVLVDEGRKVAIKGPLRISASSAAQRRGRIGRNPNRDGDSYYYSEPTSEDNAHHVCWLEASMLLDNMEVRGGMVAPLYGVEGIKTPVSPGEMRLRDDQRKVFRELVRNCDLPVWLSWQVAKAGLKTNDRKWCFEGPEEHEILNDSGETVKCRAPGGAKKPLRPRWCDERVSSDQSALSEFIKFAEGRRGAADVLVVLSELPDFLAKKGGEAMDTISVFLHSEEGSRAYRNALSMMPEAMTIVMLFLLAGLLTSGMVIFFMSPKGISRMSMAKGTMAGCGYLMFLGGVEPTHISYIMLIFFVLMVVVIPEPGQQRSIQDNQVAFLIIGILTLVSVVAANELGMLEKTKEDLFGKKNLIPSGASPWSWPDLDLKPGAAWTVYVGIVTMLSPMLHHWIKVEYGNLSLSGIAQSASVLSFMDKGIPFMKMNISVIMLLVSGWNSITVMPLLCGIGCAMLHWSLILPGIKAQQSKLAQRRVFHGVAKNPVVDGNPTVDIEEAPEMPALYEKKLALYLLLALSLASVAMCRTPFSLDEGIVLASAALGPLIEGNTSLLWNGPMAVSMTGVMRGNYYAFVGVAYNLWKMKTARRGTANGKTLGEVWKRELNLLDKQQFELYKRTDIVEVDRDTARRHLAEGKVDTGVAVSRGTAKLRWFHERGYVKLEGRVIDLGCGRGGWCYYAAAQKEVSGVKGFTLGRDGHEKPMNVQSLGWNIITFKDKTDVHPLEPVKCDTLLCDIGESSSSSVTEGERTVRVLDTVEKWLACGVDNFCVKVLAPYMRDVLEKLELLQRRFGGTVIRNPLSRNSTHEMYYVSGARSNVTFTVNQTSRLLMRRMRRPTGKVTLEADVTLPIGTRSVETDKGPLDKEAIKERVERIKSEYMTSWFYDNDNPYRTWHYCGSYVTKTSGSAASMVNGVIKLLTYPWDKIEEVTRMAMTDTTPFGQQRVFKEKVDTRAKDPPAGTRKIMKVVNRWLFRHLAREKNPRLCTKEEFIAKVRSHAAIGAYLEEQDQWKTANEAVQDPKFWELVDEERKLHQQGRCRTCVYNMMGKREKKLSEFGKAKGSRAIWYMWLGARYLEFEALGFLNEDHWASRENSGGGVEGIGLQYLGYVIRDLAAMDGGGLYADDTAGWDTRITEADLDDEQEILNYMSPHHKKLAQAVMEMTYKNKVVKVLRPAPGGKAYMDVISRRDQRGSGQVVTYALNTITNLKVQLIRMAEAEMVIHHQHVQDCDESVLTRLEAWLTEHGCDRLRRMAVSGDDCVVRPIDDRFGLALSHLNAMSKVRKDISEWQPSKGWNDWENVPFCSHHFHELQLKDGRRIVVPCREQDELIGRGRVSPGNGWMIKETACLSKAYANMWSLMYFHKRDMRLLSLAVSSAVPTSWVPQGRTTWSIHGKGEWMTTEDRLEVWNRVWITNNPHMQDKTMVKEWRDVPYLTKRQDKLCGSLIGMTNRATWASNIHLVIHRIRTLVGQEKYTDYLTVMDRYSVDADLQPGELI</sequence>
<accession>Q9YRV3</accession>
<proteinExistence type="evidence at protein level"/>
<reference key="1">
    <citation type="journal article" date="1999" name="Arch. Virol.">
        <title>Complete nucleotide sequence and phylogeny of an American strain of yellow fever virus, TRINID79A.</title>
        <authorList>
            <person name="Pisano M.R."/>
            <person name="Mercier V."/>
            <person name="Deubel V."/>
            <person name="Tolou H."/>
        </authorList>
    </citation>
    <scope>NUCLEOTIDE SEQUENCE [GENOMIC RNA]</scope>
</reference>
<reference key="2">
    <citation type="journal article" date="2004" name="J. Virol.">
        <title>Alterations of pr-M cleavage and virus export in pr-M junction chimeric dengue viruses.</title>
        <authorList>
            <person name="Keelapang P."/>
            <person name="Sriburi R."/>
            <person name="Supasa S."/>
            <person name="Panyadee N."/>
            <person name="Songjaeng A."/>
            <person name="Jairungsri A."/>
            <person name="Puttikhunt C."/>
            <person name="Kasinrerk W."/>
            <person name="Malasit P."/>
            <person name="Sittisombut N."/>
        </authorList>
    </citation>
    <scope>PROTEOLYTIC CLEAVAGE (GENOME POLYPROTEIN)</scope>
</reference>